<protein>
    <recommendedName>
        <fullName evidence="1">RISC-loading complex subunit tarbp2</fullName>
    </recommendedName>
</protein>
<accession>Q5BJ52</accession>
<proteinExistence type="evidence at transcript level"/>
<reference key="1">
    <citation type="submission" date="2005-03" db="EMBL/GenBank/DDBJ databases">
        <authorList>
            <consortium name="NIH - Xenopus Gene Collection (XGC) project"/>
        </authorList>
    </citation>
    <scope>NUCLEOTIDE SEQUENCE [LARGE SCALE MRNA]</scope>
    <source>
        <tissue>Embryo</tissue>
    </source>
</reference>
<feature type="chain" id="PRO_0000373975" description="RISC-loading complex subunit tarbp2">
    <location>
        <begin position="1"/>
        <end position="351"/>
    </location>
</feature>
<feature type="domain" description="DRBM 1" evidence="1">
    <location>
        <begin position="29"/>
        <end position="96"/>
    </location>
</feature>
<feature type="domain" description="DRBM 2" evidence="1">
    <location>
        <begin position="150"/>
        <end position="218"/>
    </location>
</feature>
<feature type="domain" description="DRBM 3" evidence="1">
    <location>
        <begin position="278"/>
        <end position="346"/>
    </location>
</feature>
<feature type="region of interest" description="Disordered" evidence="2">
    <location>
        <begin position="1"/>
        <end position="22"/>
    </location>
</feature>
<feature type="region of interest" description="Disordered" evidence="2">
    <location>
        <begin position="222"/>
        <end position="243"/>
    </location>
</feature>
<feature type="compositionally biased region" description="Polar residues" evidence="2">
    <location>
        <begin position="1"/>
        <end position="15"/>
    </location>
</feature>
<evidence type="ECO:0000255" key="1">
    <source>
        <dbReference type="HAMAP-Rule" id="MF_03034"/>
    </source>
</evidence>
<evidence type="ECO:0000256" key="2">
    <source>
        <dbReference type="SAM" id="MobiDB-lite"/>
    </source>
</evidence>
<evidence type="ECO:0000305" key="3"/>
<dbReference type="EMBL" id="BC091619">
    <property type="protein sequence ID" value="AAH91619.1"/>
    <property type="status" value="ALT_INIT"/>
    <property type="molecule type" value="mRNA"/>
</dbReference>
<dbReference type="RefSeq" id="NP_001025646.1">
    <property type="nucleotide sequence ID" value="NM_001030475.1"/>
</dbReference>
<dbReference type="RefSeq" id="XP_012812552.1">
    <property type="nucleotide sequence ID" value="XM_012957098.3"/>
</dbReference>
<dbReference type="SMR" id="Q5BJ52"/>
<dbReference type="FunCoup" id="Q5BJ52">
    <property type="interactions" value="2271"/>
</dbReference>
<dbReference type="STRING" id="8364.ENSXETP00000023678"/>
<dbReference type="PaxDb" id="8364-ENSXETP00000060479"/>
<dbReference type="DNASU" id="595034"/>
<dbReference type="GeneID" id="595034"/>
<dbReference type="KEGG" id="xtr:595034"/>
<dbReference type="AGR" id="Xenbase:XB-GENE-491800"/>
<dbReference type="CTD" id="6895"/>
<dbReference type="Xenbase" id="XB-GENE-491800">
    <property type="gene designation" value="tarbp2"/>
</dbReference>
<dbReference type="eggNOG" id="KOG3732">
    <property type="taxonomic scope" value="Eukaryota"/>
</dbReference>
<dbReference type="InParanoid" id="Q5BJ52"/>
<dbReference type="OrthoDB" id="10056847at2759"/>
<dbReference type="Reactome" id="R-XTR-203927">
    <property type="pathway name" value="MicroRNA (miRNA) biogenesis"/>
</dbReference>
<dbReference type="Reactome" id="R-XTR-426486">
    <property type="pathway name" value="Small interfering RNA (siRNA) biogenesis"/>
</dbReference>
<dbReference type="Reactome" id="R-XTR-9833482">
    <property type="pathway name" value="PKR-mediated signaling"/>
</dbReference>
<dbReference type="Proteomes" id="UP000008143">
    <property type="component" value="Chromosome 2"/>
</dbReference>
<dbReference type="GO" id="GO:0005737">
    <property type="term" value="C:cytoplasm"/>
    <property type="evidence" value="ECO:0007669"/>
    <property type="project" value="UniProtKB-SubCell"/>
</dbReference>
<dbReference type="GO" id="GO:0016442">
    <property type="term" value="C:RISC complex"/>
    <property type="evidence" value="ECO:0000250"/>
    <property type="project" value="UniProtKB"/>
</dbReference>
<dbReference type="GO" id="GO:0070578">
    <property type="term" value="C:RISC-loading complex"/>
    <property type="evidence" value="ECO:0000250"/>
    <property type="project" value="UniProtKB"/>
</dbReference>
<dbReference type="GO" id="GO:0003725">
    <property type="term" value="F:double-stranded RNA binding"/>
    <property type="evidence" value="ECO:0007669"/>
    <property type="project" value="InterPro"/>
</dbReference>
<dbReference type="GO" id="GO:0035198">
    <property type="term" value="F:miRNA binding"/>
    <property type="evidence" value="ECO:0007669"/>
    <property type="project" value="UniProtKB-UniRule"/>
</dbReference>
<dbReference type="GO" id="GO:0070883">
    <property type="term" value="F:pre-miRNA binding"/>
    <property type="evidence" value="ECO:0007669"/>
    <property type="project" value="InterPro"/>
</dbReference>
<dbReference type="GO" id="GO:0042803">
    <property type="term" value="F:protein homodimerization activity"/>
    <property type="evidence" value="ECO:0007669"/>
    <property type="project" value="UniProtKB-UniRule"/>
</dbReference>
<dbReference type="GO" id="GO:0035197">
    <property type="term" value="F:siRNA binding"/>
    <property type="evidence" value="ECO:0007669"/>
    <property type="project" value="UniProtKB-UniRule"/>
</dbReference>
<dbReference type="GO" id="GO:0098795">
    <property type="term" value="P:global gene silencing by mRNA cleavage"/>
    <property type="evidence" value="ECO:0007669"/>
    <property type="project" value="UniProtKB-UniRule"/>
</dbReference>
<dbReference type="GO" id="GO:0031054">
    <property type="term" value="P:pre-miRNA processing"/>
    <property type="evidence" value="ECO:0007669"/>
    <property type="project" value="UniProtKB-UniRule"/>
</dbReference>
<dbReference type="GO" id="GO:1903798">
    <property type="term" value="P:regulation of miRNA processing"/>
    <property type="evidence" value="ECO:0007669"/>
    <property type="project" value="InterPro"/>
</dbReference>
<dbReference type="GO" id="GO:0070921">
    <property type="term" value="P:regulation of siRNA processing"/>
    <property type="evidence" value="ECO:0007669"/>
    <property type="project" value="InterPro"/>
</dbReference>
<dbReference type="GO" id="GO:0006417">
    <property type="term" value="P:regulation of translation"/>
    <property type="evidence" value="ECO:0007669"/>
    <property type="project" value="UniProtKB-KW"/>
</dbReference>
<dbReference type="GO" id="GO:0046782">
    <property type="term" value="P:regulation of viral transcription"/>
    <property type="evidence" value="ECO:0007669"/>
    <property type="project" value="InterPro"/>
</dbReference>
<dbReference type="GO" id="GO:0070922">
    <property type="term" value="P:RISC complex assembly"/>
    <property type="evidence" value="ECO:0007669"/>
    <property type="project" value="UniProtKB-UniRule"/>
</dbReference>
<dbReference type="GO" id="GO:0030422">
    <property type="term" value="P:siRNA processing"/>
    <property type="evidence" value="ECO:0007669"/>
    <property type="project" value="UniProtKB-UniRule"/>
</dbReference>
<dbReference type="CDD" id="cd19890">
    <property type="entry name" value="DSRM_TARBP2_rpt1"/>
    <property type="match status" value="1"/>
</dbReference>
<dbReference type="CDD" id="cd10844">
    <property type="entry name" value="DSRM_TARBP2_rpt2"/>
    <property type="match status" value="1"/>
</dbReference>
<dbReference type="CDD" id="cd19893">
    <property type="entry name" value="DSRM_TARBP2_rpt3"/>
    <property type="match status" value="1"/>
</dbReference>
<dbReference type="FunFam" id="3.30.160.20:FF:000005">
    <property type="entry name" value="Putative double-stranded RNA-specific adenosine deaminase"/>
    <property type="match status" value="1"/>
</dbReference>
<dbReference type="FunFam" id="3.30.160.20:FF:000019">
    <property type="entry name" value="RISC-loading complex subunit TARBP2"/>
    <property type="match status" value="1"/>
</dbReference>
<dbReference type="FunFam" id="3.30.160.20:FF:000018">
    <property type="entry name" value="RISC-loading complex subunit TARBP2 isoform X3"/>
    <property type="match status" value="1"/>
</dbReference>
<dbReference type="Gene3D" id="3.30.160.20">
    <property type="match status" value="3"/>
</dbReference>
<dbReference type="HAMAP" id="MF_03034">
    <property type="entry name" value="TRBP2"/>
    <property type="match status" value="1"/>
</dbReference>
<dbReference type="InterPro" id="IPR014720">
    <property type="entry name" value="dsRBD_dom"/>
</dbReference>
<dbReference type="InterPro" id="IPR051247">
    <property type="entry name" value="RLC_Component"/>
</dbReference>
<dbReference type="InterPro" id="IPR028605">
    <property type="entry name" value="TRBP2"/>
</dbReference>
<dbReference type="InterPro" id="IPR044469">
    <property type="entry name" value="TRBP2_DSRM_1"/>
</dbReference>
<dbReference type="InterPro" id="IPR044470">
    <property type="entry name" value="TRBP2_DSRM_2"/>
</dbReference>
<dbReference type="InterPro" id="IPR044471">
    <property type="entry name" value="TRBP2_DSRM_3"/>
</dbReference>
<dbReference type="PANTHER" id="PTHR46205">
    <property type="entry name" value="LOQUACIOUS, ISOFORM B"/>
    <property type="match status" value="1"/>
</dbReference>
<dbReference type="PANTHER" id="PTHR46205:SF1">
    <property type="entry name" value="RISC-LOADING COMPLEX SUBUNIT TARBP2"/>
    <property type="match status" value="1"/>
</dbReference>
<dbReference type="Pfam" id="PF00035">
    <property type="entry name" value="dsrm"/>
    <property type="match status" value="2"/>
</dbReference>
<dbReference type="SMART" id="SM00358">
    <property type="entry name" value="DSRM"/>
    <property type="match status" value="3"/>
</dbReference>
<dbReference type="SUPFAM" id="SSF54768">
    <property type="entry name" value="dsRNA-binding domain-like"/>
    <property type="match status" value="3"/>
</dbReference>
<dbReference type="PROSITE" id="PS50137">
    <property type="entry name" value="DS_RBD"/>
    <property type="match status" value="3"/>
</dbReference>
<sequence>MSENGDCENQTSSGFPSIEQMLASSPGKTPISLLQEYGTRVGKTPVYDLLKAEGQAHQPNFTFRVSVGDINCTGQGPSKKAAKHKAAEVALSLLKGGDMFGMMCEENSVMLSVEQPVELREVADVSPPPTNRNHTIEMKPPLSAQQSECNPVGALQELVVQKGWRLPEYTVTQESGPAHRKEFTMTCRVERFLEIGSGTSKKLAKRNAAAKMLLQIHRVPAEHRESGETEPEEDQFSMGKLDGSRGRGTACTWDSLRNSSGEKILHLRSNPLTILSSGFCSLLQDLSEEQSFQISYLDIDEPSLSGLYQCLVELSTQPTTVCHGSATTRDAARANAAHNALQYLKIMAGGK</sequence>
<organism>
    <name type="scientific">Xenopus tropicalis</name>
    <name type="common">Western clawed frog</name>
    <name type="synonym">Silurana tropicalis</name>
    <dbReference type="NCBI Taxonomy" id="8364"/>
    <lineage>
        <taxon>Eukaryota</taxon>
        <taxon>Metazoa</taxon>
        <taxon>Chordata</taxon>
        <taxon>Craniata</taxon>
        <taxon>Vertebrata</taxon>
        <taxon>Euteleostomi</taxon>
        <taxon>Amphibia</taxon>
        <taxon>Batrachia</taxon>
        <taxon>Anura</taxon>
        <taxon>Pipoidea</taxon>
        <taxon>Pipidae</taxon>
        <taxon>Xenopodinae</taxon>
        <taxon>Xenopus</taxon>
        <taxon>Silurana</taxon>
    </lineage>
</organism>
<gene>
    <name type="primary">tarbp2</name>
</gene>
<comment type="function">
    <text evidence="1">Required for formation of the RNA induced silencing complex (RISC). Component of the RISC loading complex (RLC), also known as the micro-RNA (miRNA) loading complex (miRLC), which is composed of dicer1, ago2 and tarbp2. Within the RLC/miRLC, dicer1 and tarbp2 are required to process precursor miRNAs (pre-miRNAs) to mature miRNAs and then load them onto ago2. ago2 bound to the mature miRNA constitutes the minimal RISC and may subsequently dissociate from dicer1 and tarbp2. May also play a role in the production of short interfering RNAs (siRNAs) from double-stranded RNA (dsRNA) by dicer1.</text>
</comment>
<comment type="subunit">
    <text evidence="1">Self-associates. Component of the RISC loading complex (RLC), or micro-RNA (miRNA) loading complex (miRLC), which is composed of dicer1, ago2 and tarbp2. Note that the trimeric RLC/miRLC is also referred to as RISC.</text>
</comment>
<comment type="subcellular location">
    <subcellularLocation>
        <location evidence="1">Cytoplasm</location>
    </subcellularLocation>
</comment>
<comment type="similarity">
    <text evidence="1">Belongs to the TARBP2 family.</text>
</comment>
<comment type="sequence caution" evidence="3">
    <conflict type="erroneous initiation">
        <sequence resource="EMBL-CDS" id="AAH91619"/>
    </conflict>
</comment>
<keyword id="KW-0963">Cytoplasm</keyword>
<keyword id="KW-1185">Reference proteome</keyword>
<keyword id="KW-0677">Repeat</keyword>
<keyword id="KW-0694">RNA-binding</keyword>
<keyword id="KW-0943">RNA-mediated gene silencing</keyword>
<keyword id="KW-0810">Translation regulation</keyword>
<name>TRBP2_XENTR</name>